<keyword id="KW-1185">Reference proteome</keyword>
<keyword id="KW-0677">Repeat</keyword>
<keyword id="KW-0694">RNA-binding</keyword>
<sequence length="1001" mass="110369">MPSQVMDQRHHMSQYSHPTLAASSFSEELRLPTERQVGFWKQESLPHHMGSKSVASSPIEKPQPIGTRMAGRLELLQPYKLRDQGAAFSLEHKLFGQERHANLPPSPWRPDQETGRQTDSSLKSAALFSDGRINPNGAYNENGLFSSSVSDIFDKKLRLTSKNGLVGQSIEKVDLNHVDDEPFELTEEIEAQIIGNLLPDDDDLLSGVVDEVGYPTNANNRDDADDDIFYTGGGMELETDENKKLQEFNGSANDGIGLLNGVLNGEHLYREQPSRTLFVRNINSNVEDSELKLLFEHFGDIRALYTACKHRGFVMISYYDIRSALNAKMELQNKALRRRKLDIHYSIPKDNPSEKDINQGTIVLFNVDLSLTNDDLHKIFGDYGEIKEIRDTPQKGHHKIIEFYDVRAAEAALRALNRNDIAGKKIKLETSRLGAARRLSQHMSSELCQEEFGVCKLGSPSTSSPPIASFGSTNLATITSTGHENGSIQGMHSGLQTSISQFRETSFPGLSSTIPQSLSTPIGISSGATHSNQAALGEISQSLGRMNGHMNYSFQGMSALHPHSLPEVHNGVNNGVPYNLNSMAQVVNGTNSRTAEAVDNRHLHKVGSGNLNGHSFDRAEGALGFSRSGSSSVRGHQLMWNNSSNFHHHPNSPVLWPSPGSFVNNVPSRSPAQMHGVPRAPSSHMIDNVLPMHHLHVGSAPAINPSLWDRRHGYAGELTEAPNFHPGSVGSMGFPGSPQLHSMELNNIYPQTGGNCMDPTVSPAQIGGPSPQQRGSMFHGRNPMVPLPSFDSPGERMRSRRNDSNGNQSDNKKQYELDVDRIVRGDDSRTTLMIKNIPNKYTSKMLLAAIDENHKGTYDFIYLPIDFKNKCNVGYAFINMTNPQHIIPFYQTFNGKKWEKFNSEKVASLAYARIQGKSALIAHFQNSSLMNEDKRCRPILFHSDGPNAGDQEPFPMGTNIRARSGRSRASSGEESHQDISITSVNCDTSTNGVDTTGPAKD</sequence>
<comment type="function">
    <text evidence="1">Probable RNA-binding protein that may play a role in growth regulation.</text>
</comment>
<feature type="chain" id="PRO_0000409348" description="Protein MEI2-like 4">
    <location>
        <begin position="1"/>
        <end position="1001"/>
    </location>
</feature>
<feature type="domain" description="RRM 1" evidence="2">
    <location>
        <begin position="275"/>
        <end position="348"/>
    </location>
</feature>
<feature type="domain" description="RRM 2" evidence="2">
    <location>
        <begin position="360"/>
        <end position="433"/>
    </location>
</feature>
<feature type="region of interest" description="Disordered" evidence="3">
    <location>
        <begin position="100"/>
        <end position="120"/>
    </location>
</feature>
<feature type="region of interest" description="Disordered" evidence="3">
    <location>
        <begin position="767"/>
        <end position="815"/>
    </location>
</feature>
<feature type="region of interest" description="Disordered" evidence="3">
    <location>
        <begin position="941"/>
        <end position="1001"/>
    </location>
</feature>
<feature type="compositionally biased region" description="Basic and acidic residues" evidence="3">
    <location>
        <begin position="793"/>
        <end position="803"/>
    </location>
</feature>
<feature type="compositionally biased region" description="Polar residues" evidence="3">
    <location>
        <begin position="978"/>
        <end position="994"/>
    </location>
</feature>
<protein>
    <recommendedName>
        <fullName>Protein MEI2-like 4</fullName>
        <shortName>OML4</shortName>
    </recommendedName>
    <alternativeName>
        <fullName>MEI2-like protein 4</fullName>
    </alternativeName>
</protein>
<name>OML4_ORYSJ</name>
<accession>Q64M78</accession>
<accession>A0A0N7KFD5</accession>
<proteinExistence type="evidence at transcript level"/>
<evidence type="ECO:0000250" key="1"/>
<evidence type="ECO:0000255" key="2">
    <source>
        <dbReference type="PROSITE-ProRule" id="PRU00176"/>
    </source>
</evidence>
<evidence type="ECO:0000256" key="3">
    <source>
        <dbReference type="SAM" id="MobiDB-lite"/>
    </source>
</evidence>
<dbReference type="EMBL" id="AB244279">
    <property type="protein sequence ID" value="BAE79766.1"/>
    <property type="molecule type" value="mRNA"/>
</dbReference>
<dbReference type="EMBL" id="AP007253">
    <property type="protein sequence ID" value="BAD46727.1"/>
    <property type="molecule type" value="Genomic_DNA"/>
</dbReference>
<dbReference type="EMBL" id="AP008208">
    <property type="protein sequence ID" value="BAH91717.1"/>
    <property type="molecule type" value="Genomic_DNA"/>
</dbReference>
<dbReference type="EMBL" id="AP014958">
    <property type="protein sequence ID" value="BAS78913.1"/>
    <property type="molecule type" value="Genomic_DNA"/>
</dbReference>
<dbReference type="EMBL" id="CM000139">
    <property type="protein sequence ID" value="EEE57084.1"/>
    <property type="molecule type" value="Genomic_DNA"/>
</dbReference>
<dbReference type="EMBL" id="AK121247">
    <property type="protein sequence ID" value="BAH00394.1"/>
    <property type="molecule type" value="mRNA"/>
</dbReference>
<dbReference type="RefSeq" id="XP_015625574.1">
    <property type="nucleotide sequence ID" value="XM_015770088.1"/>
</dbReference>
<dbReference type="SMR" id="Q64M78"/>
<dbReference type="FunCoup" id="Q64M78">
    <property type="interactions" value="74"/>
</dbReference>
<dbReference type="STRING" id="39947.Q64M78"/>
<dbReference type="PaxDb" id="39947-Q64M78"/>
<dbReference type="EnsemblPlants" id="Os02t0517531-01">
    <property type="protein sequence ID" value="Os02t0517531-01"/>
    <property type="gene ID" value="Os02g0517531"/>
</dbReference>
<dbReference type="Gramene" id="Os02t0517531-01">
    <property type="protein sequence ID" value="Os02t0517531-01"/>
    <property type="gene ID" value="Os02g0517531"/>
</dbReference>
<dbReference type="KEGG" id="dosa:Os02g0517531"/>
<dbReference type="eggNOG" id="KOG4660">
    <property type="taxonomic scope" value="Eukaryota"/>
</dbReference>
<dbReference type="HOGENOM" id="CLU_012447_1_0_1"/>
<dbReference type="InParanoid" id="Q64M78"/>
<dbReference type="OMA" id="NQANVGE"/>
<dbReference type="OrthoDB" id="417481at2759"/>
<dbReference type="Proteomes" id="UP000000763">
    <property type="component" value="Chromosome 2"/>
</dbReference>
<dbReference type="Proteomes" id="UP000007752">
    <property type="component" value="Chromosome 2"/>
</dbReference>
<dbReference type="Proteomes" id="UP000059680">
    <property type="component" value="Chromosome 2"/>
</dbReference>
<dbReference type="ExpressionAtlas" id="Q64M78">
    <property type="expression patterns" value="baseline and differential"/>
</dbReference>
<dbReference type="GO" id="GO:0003723">
    <property type="term" value="F:RNA binding"/>
    <property type="evidence" value="ECO:0000318"/>
    <property type="project" value="GO_Central"/>
</dbReference>
<dbReference type="GO" id="GO:0045836">
    <property type="term" value="P:positive regulation of meiotic nuclear division"/>
    <property type="evidence" value="ECO:0000318"/>
    <property type="project" value="GO_Central"/>
</dbReference>
<dbReference type="CDD" id="cd12524">
    <property type="entry name" value="RRM1_MEI2_like"/>
    <property type="match status" value="1"/>
</dbReference>
<dbReference type="CDD" id="cd12531">
    <property type="entry name" value="RRM3_MEI2_like"/>
    <property type="match status" value="1"/>
</dbReference>
<dbReference type="FunFam" id="3.30.70.330:FF:000063">
    <property type="entry name" value="MEI2-like protein 5 isoform 2"/>
    <property type="match status" value="1"/>
</dbReference>
<dbReference type="FunFam" id="3.30.70.330:FF:000101">
    <property type="entry name" value="Protein MEI2-like 1"/>
    <property type="match status" value="1"/>
</dbReference>
<dbReference type="Gene3D" id="3.30.70.330">
    <property type="match status" value="3"/>
</dbReference>
<dbReference type="InterPro" id="IPR034453">
    <property type="entry name" value="MEI2-like_RRM1"/>
</dbReference>
<dbReference type="InterPro" id="IPR034454">
    <property type="entry name" value="MEI2-like_RRM3"/>
</dbReference>
<dbReference type="InterPro" id="IPR007201">
    <property type="entry name" value="Mei2-like_Rrm_C"/>
</dbReference>
<dbReference type="InterPro" id="IPR012677">
    <property type="entry name" value="Nucleotide-bd_a/b_plait_sf"/>
</dbReference>
<dbReference type="InterPro" id="IPR035979">
    <property type="entry name" value="RBD_domain_sf"/>
</dbReference>
<dbReference type="InterPro" id="IPR000504">
    <property type="entry name" value="RRM_dom"/>
</dbReference>
<dbReference type="PANTHER" id="PTHR23189">
    <property type="entry name" value="RNA RECOGNITION MOTIF-CONTAINING"/>
    <property type="match status" value="1"/>
</dbReference>
<dbReference type="Pfam" id="PF00076">
    <property type="entry name" value="RRM_1"/>
    <property type="match status" value="2"/>
</dbReference>
<dbReference type="Pfam" id="PF04059">
    <property type="entry name" value="RRM_2"/>
    <property type="match status" value="1"/>
</dbReference>
<dbReference type="SMART" id="SM00360">
    <property type="entry name" value="RRM"/>
    <property type="match status" value="3"/>
</dbReference>
<dbReference type="SUPFAM" id="SSF54928">
    <property type="entry name" value="RNA-binding domain, RBD"/>
    <property type="match status" value="2"/>
</dbReference>
<dbReference type="PROSITE" id="PS50102">
    <property type="entry name" value="RRM"/>
    <property type="match status" value="2"/>
</dbReference>
<organism>
    <name type="scientific">Oryza sativa subsp. japonica</name>
    <name type="common">Rice</name>
    <dbReference type="NCBI Taxonomy" id="39947"/>
    <lineage>
        <taxon>Eukaryota</taxon>
        <taxon>Viridiplantae</taxon>
        <taxon>Streptophyta</taxon>
        <taxon>Embryophyta</taxon>
        <taxon>Tracheophyta</taxon>
        <taxon>Spermatophyta</taxon>
        <taxon>Magnoliopsida</taxon>
        <taxon>Liliopsida</taxon>
        <taxon>Poales</taxon>
        <taxon>Poaceae</taxon>
        <taxon>BOP clade</taxon>
        <taxon>Oryzoideae</taxon>
        <taxon>Oryzeae</taxon>
        <taxon>Oryzinae</taxon>
        <taxon>Oryza</taxon>
        <taxon>Oryza sativa</taxon>
    </lineage>
</organism>
<reference key="1">
    <citation type="journal article" date="2006" name="Plant Cell">
        <title>PLASTOCHRON2 regulates leaf initiation and maturation in rice.</title>
        <authorList>
            <person name="Kawakatsu T."/>
            <person name="Itoh J."/>
            <person name="Miyoshi K."/>
            <person name="Kurata N."/>
            <person name="Alvarez N."/>
            <person name="Veit B."/>
            <person name="Nagato Y."/>
        </authorList>
    </citation>
    <scope>NUCLEOTIDE SEQUENCE [MRNA]</scope>
    <source>
        <strain>cv. Nipponbare</strain>
    </source>
</reference>
<reference key="2">
    <citation type="journal article" date="2005" name="Nature">
        <title>The map-based sequence of the rice genome.</title>
        <authorList>
            <consortium name="International rice genome sequencing project (IRGSP)"/>
        </authorList>
    </citation>
    <scope>NUCLEOTIDE SEQUENCE [LARGE SCALE GENOMIC DNA]</scope>
    <source>
        <strain>cv. Nipponbare</strain>
    </source>
</reference>
<reference key="3">
    <citation type="journal article" date="2008" name="Nucleic Acids Res.">
        <title>The rice annotation project database (RAP-DB): 2008 update.</title>
        <authorList>
            <consortium name="The rice annotation project (RAP)"/>
        </authorList>
    </citation>
    <scope>GENOME REANNOTATION</scope>
    <source>
        <strain>cv. Nipponbare</strain>
    </source>
</reference>
<reference key="4">
    <citation type="journal article" date="2013" name="Rice">
        <title>Improvement of the Oryza sativa Nipponbare reference genome using next generation sequence and optical map data.</title>
        <authorList>
            <person name="Kawahara Y."/>
            <person name="de la Bastide M."/>
            <person name="Hamilton J.P."/>
            <person name="Kanamori H."/>
            <person name="McCombie W.R."/>
            <person name="Ouyang S."/>
            <person name="Schwartz D.C."/>
            <person name="Tanaka T."/>
            <person name="Wu J."/>
            <person name="Zhou S."/>
            <person name="Childs K.L."/>
            <person name="Davidson R.M."/>
            <person name="Lin H."/>
            <person name="Quesada-Ocampo L."/>
            <person name="Vaillancourt B."/>
            <person name="Sakai H."/>
            <person name="Lee S.S."/>
            <person name="Kim J."/>
            <person name="Numa H."/>
            <person name="Itoh T."/>
            <person name="Buell C.R."/>
            <person name="Matsumoto T."/>
        </authorList>
    </citation>
    <scope>GENOME REANNOTATION</scope>
    <source>
        <strain>cv. Nipponbare</strain>
    </source>
</reference>
<reference key="5">
    <citation type="journal article" date="2005" name="PLoS Biol.">
        <title>The genomes of Oryza sativa: a history of duplications.</title>
        <authorList>
            <person name="Yu J."/>
            <person name="Wang J."/>
            <person name="Lin W."/>
            <person name="Li S."/>
            <person name="Li H."/>
            <person name="Zhou J."/>
            <person name="Ni P."/>
            <person name="Dong W."/>
            <person name="Hu S."/>
            <person name="Zeng C."/>
            <person name="Zhang J."/>
            <person name="Zhang Y."/>
            <person name="Li R."/>
            <person name="Xu Z."/>
            <person name="Li S."/>
            <person name="Li X."/>
            <person name="Zheng H."/>
            <person name="Cong L."/>
            <person name="Lin L."/>
            <person name="Yin J."/>
            <person name="Geng J."/>
            <person name="Li G."/>
            <person name="Shi J."/>
            <person name="Liu J."/>
            <person name="Lv H."/>
            <person name="Li J."/>
            <person name="Wang J."/>
            <person name="Deng Y."/>
            <person name="Ran L."/>
            <person name="Shi X."/>
            <person name="Wang X."/>
            <person name="Wu Q."/>
            <person name="Li C."/>
            <person name="Ren X."/>
            <person name="Wang J."/>
            <person name="Wang X."/>
            <person name="Li D."/>
            <person name="Liu D."/>
            <person name="Zhang X."/>
            <person name="Ji Z."/>
            <person name="Zhao W."/>
            <person name="Sun Y."/>
            <person name="Zhang Z."/>
            <person name="Bao J."/>
            <person name="Han Y."/>
            <person name="Dong L."/>
            <person name="Ji J."/>
            <person name="Chen P."/>
            <person name="Wu S."/>
            <person name="Liu J."/>
            <person name="Xiao Y."/>
            <person name="Bu D."/>
            <person name="Tan J."/>
            <person name="Yang L."/>
            <person name="Ye C."/>
            <person name="Zhang J."/>
            <person name="Xu J."/>
            <person name="Zhou Y."/>
            <person name="Yu Y."/>
            <person name="Zhang B."/>
            <person name="Zhuang S."/>
            <person name="Wei H."/>
            <person name="Liu B."/>
            <person name="Lei M."/>
            <person name="Yu H."/>
            <person name="Li Y."/>
            <person name="Xu H."/>
            <person name="Wei S."/>
            <person name="He X."/>
            <person name="Fang L."/>
            <person name="Zhang Z."/>
            <person name="Zhang Y."/>
            <person name="Huang X."/>
            <person name="Su Z."/>
            <person name="Tong W."/>
            <person name="Li J."/>
            <person name="Tong Z."/>
            <person name="Li S."/>
            <person name="Ye J."/>
            <person name="Wang L."/>
            <person name="Fang L."/>
            <person name="Lei T."/>
            <person name="Chen C.-S."/>
            <person name="Chen H.-C."/>
            <person name="Xu Z."/>
            <person name="Li H."/>
            <person name="Huang H."/>
            <person name="Zhang F."/>
            <person name="Xu H."/>
            <person name="Li N."/>
            <person name="Zhao C."/>
            <person name="Li S."/>
            <person name="Dong L."/>
            <person name="Huang Y."/>
            <person name="Li L."/>
            <person name="Xi Y."/>
            <person name="Qi Q."/>
            <person name="Li W."/>
            <person name="Zhang B."/>
            <person name="Hu W."/>
            <person name="Zhang Y."/>
            <person name="Tian X."/>
            <person name="Jiao Y."/>
            <person name="Liang X."/>
            <person name="Jin J."/>
            <person name="Gao L."/>
            <person name="Zheng W."/>
            <person name="Hao B."/>
            <person name="Liu S.-M."/>
            <person name="Wang W."/>
            <person name="Yuan L."/>
            <person name="Cao M."/>
            <person name="McDermott J."/>
            <person name="Samudrala R."/>
            <person name="Wang J."/>
            <person name="Wong G.K.-S."/>
            <person name="Yang H."/>
        </authorList>
    </citation>
    <scope>NUCLEOTIDE SEQUENCE [LARGE SCALE GENOMIC DNA]</scope>
    <source>
        <strain>cv. Nipponbare</strain>
    </source>
</reference>
<reference key="6">
    <citation type="journal article" date="2003" name="Science">
        <title>Collection, mapping, and annotation of over 28,000 cDNA clones from japonica rice.</title>
        <authorList>
            <consortium name="The rice full-length cDNA consortium"/>
        </authorList>
    </citation>
    <scope>NUCLEOTIDE SEQUENCE [LARGE SCALE MRNA]</scope>
    <source>
        <strain>cv. Nipponbare</strain>
    </source>
</reference>
<reference key="7">
    <citation type="journal article" date="2004" name="Plant Mol. Biol.">
        <title>Diversification of genes encoding mei2 -like RNA binding proteins in plants.</title>
        <authorList>
            <person name="Anderson G.H."/>
            <person name="Alvarez N.D."/>
            <person name="Gilman C."/>
            <person name="Jeffares D.C."/>
            <person name="Trainor V.C."/>
            <person name="Hanson M.R."/>
            <person name="Veit B."/>
        </authorList>
    </citation>
    <scope>GENE FAMILY</scope>
</reference>
<gene>
    <name type="primary">ML4</name>
    <name type="ordered locus">Os02g0517531</name>
    <name type="ordered locus">LOC_Os02g31290</name>
    <name type="ORF">OsJ_06913</name>
    <name type="ORF">OSJNBa0004O05.27</name>
</gene>